<accession>Q97QA8</accession>
<name>VATA_STRPN</name>
<evidence type="ECO:0000255" key="1">
    <source>
        <dbReference type="HAMAP-Rule" id="MF_00309"/>
    </source>
</evidence>
<sequence>MTQGKIIKVSGPLVIASGMQEANIQDICRVGKLGLIGEIIEMRRDQASIQVYEETSGLGPGEPVVTTGEPLSVELGPGLISQMFDGIQRPLDRFKLATHNDFLVRGVEVPSLDRDIKWHFDSTIAIGQKVSTGDILGTVKETEVVNHKIMVPYGVSGEVVSIASGDFTIDEVVYEIKKLDGSFYKGTLMQKWPVRKARPVSKRLIPEEPLITGQRVIDAFFPVTKGGAAAVPGPFGAGKTVVQHQVAKFANVDIVIYVGCGERGNEMTDVLNEFPELIDPNTGQSIMQRTVLIANTSNMPVAAREASIYTGITMAEYFRDMGYSVAIMADSTSRWAEALREMSGRLEEMPGDEGYPAYLGSRIAEYYERAGRSQVLGLPEREGTITAIGAVSPPGGDISEPVTQNTLRIVKVFWGLDAPLAQRRHFPAINWLTSYSLYKDSVGTYIDGKEKTDWNSKITRAMNYLQRESSLEEIVRLVGIDSLSDNERLTMEIAKQIREDYLQQNAFDSVDTFTSFAKQEAMLSNILTFADQANHALELGSYFTEIMEGTVAVRDRMARSKYVSEDRLDEIKIISNEITHQIHLILETGGL</sequence>
<comment type="function">
    <text evidence="1">Produces ATP from ADP in the presence of a proton gradient across the membrane. The V-type alpha chain is a catalytic subunit.</text>
</comment>
<comment type="catalytic activity">
    <reaction evidence="1">
        <text>ATP + H2O + 4 H(+)(in) = ADP + phosphate + 5 H(+)(out)</text>
        <dbReference type="Rhea" id="RHEA:57720"/>
        <dbReference type="ChEBI" id="CHEBI:15377"/>
        <dbReference type="ChEBI" id="CHEBI:15378"/>
        <dbReference type="ChEBI" id="CHEBI:30616"/>
        <dbReference type="ChEBI" id="CHEBI:43474"/>
        <dbReference type="ChEBI" id="CHEBI:456216"/>
        <dbReference type="EC" id="7.1.2.2"/>
    </reaction>
</comment>
<comment type="similarity">
    <text evidence="1">Belongs to the ATPase alpha/beta chains family.</text>
</comment>
<protein>
    <recommendedName>
        <fullName evidence="1">V-type ATP synthase alpha chain</fullName>
        <ecNumber evidence="1">7.1.2.2</ecNumber>
    </recommendedName>
    <alternativeName>
        <fullName evidence="1">V-ATPase subunit A</fullName>
    </alternativeName>
</protein>
<proteinExistence type="inferred from homology"/>
<keyword id="KW-0066">ATP synthesis</keyword>
<keyword id="KW-0067">ATP-binding</keyword>
<keyword id="KW-0375">Hydrogen ion transport</keyword>
<keyword id="KW-0406">Ion transport</keyword>
<keyword id="KW-0547">Nucleotide-binding</keyword>
<keyword id="KW-1185">Reference proteome</keyword>
<keyword id="KW-1278">Translocase</keyword>
<keyword id="KW-0813">Transport</keyword>
<feature type="chain" id="PRO_1000059359" description="V-type ATP synthase alpha chain">
    <location>
        <begin position="1"/>
        <end position="591"/>
    </location>
</feature>
<feature type="binding site" evidence="1">
    <location>
        <begin position="233"/>
        <end position="240"/>
    </location>
    <ligand>
        <name>ATP</name>
        <dbReference type="ChEBI" id="CHEBI:30616"/>
    </ligand>
</feature>
<organism>
    <name type="scientific">Streptococcus pneumoniae serotype 4 (strain ATCC BAA-334 / TIGR4)</name>
    <dbReference type="NCBI Taxonomy" id="170187"/>
    <lineage>
        <taxon>Bacteria</taxon>
        <taxon>Bacillati</taxon>
        <taxon>Bacillota</taxon>
        <taxon>Bacilli</taxon>
        <taxon>Lactobacillales</taxon>
        <taxon>Streptococcaceae</taxon>
        <taxon>Streptococcus</taxon>
    </lineage>
</organism>
<gene>
    <name evidence="1" type="primary">atpA</name>
    <name type="ordered locus">SP_1317</name>
</gene>
<dbReference type="EC" id="7.1.2.2" evidence="1"/>
<dbReference type="EMBL" id="AE005672">
    <property type="protein sequence ID" value="AAK75415.1"/>
    <property type="molecule type" value="Genomic_DNA"/>
</dbReference>
<dbReference type="PIR" id="F95152">
    <property type="entry name" value="F95152"/>
</dbReference>
<dbReference type="RefSeq" id="WP_000191781.1">
    <property type="nucleotide sequence ID" value="NZ_CP155539.1"/>
</dbReference>
<dbReference type="SMR" id="Q97QA8"/>
<dbReference type="PaxDb" id="170187-SP_1317"/>
<dbReference type="EnsemblBacteria" id="AAK75415">
    <property type="protein sequence ID" value="AAK75415"/>
    <property type="gene ID" value="SP_1317"/>
</dbReference>
<dbReference type="KEGG" id="spn:SP_1317"/>
<dbReference type="eggNOG" id="COG1155">
    <property type="taxonomic scope" value="Bacteria"/>
</dbReference>
<dbReference type="PhylomeDB" id="Q97QA8"/>
<dbReference type="BioCyc" id="SPNE170187:G1FZB-1329-MONOMER"/>
<dbReference type="Proteomes" id="UP000000585">
    <property type="component" value="Chromosome"/>
</dbReference>
<dbReference type="GO" id="GO:0045259">
    <property type="term" value="C:proton-transporting ATP synthase complex"/>
    <property type="evidence" value="ECO:0007669"/>
    <property type="project" value="UniProtKB-ARBA"/>
</dbReference>
<dbReference type="GO" id="GO:0005524">
    <property type="term" value="F:ATP binding"/>
    <property type="evidence" value="ECO:0007669"/>
    <property type="project" value="UniProtKB-UniRule"/>
</dbReference>
<dbReference type="GO" id="GO:0046933">
    <property type="term" value="F:proton-transporting ATP synthase activity, rotational mechanism"/>
    <property type="evidence" value="ECO:0007669"/>
    <property type="project" value="UniProtKB-UniRule"/>
</dbReference>
<dbReference type="GO" id="GO:0046961">
    <property type="term" value="F:proton-transporting ATPase activity, rotational mechanism"/>
    <property type="evidence" value="ECO:0007669"/>
    <property type="project" value="InterPro"/>
</dbReference>
<dbReference type="GO" id="GO:0042777">
    <property type="term" value="P:proton motive force-driven plasma membrane ATP synthesis"/>
    <property type="evidence" value="ECO:0007669"/>
    <property type="project" value="UniProtKB-UniRule"/>
</dbReference>
<dbReference type="CDD" id="cd18111">
    <property type="entry name" value="ATP-synt_V_A-type_alpha_C"/>
    <property type="match status" value="1"/>
</dbReference>
<dbReference type="CDD" id="cd18119">
    <property type="entry name" value="ATP-synt_V_A-type_alpha_N"/>
    <property type="match status" value="1"/>
</dbReference>
<dbReference type="CDD" id="cd01134">
    <property type="entry name" value="V_A-ATPase_A"/>
    <property type="match status" value="1"/>
</dbReference>
<dbReference type="FunFam" id="2.40.30.20:FF:000002">
    <property type="entry name" value="V-type proton ATPase catalytic subunit A"/>
    <property type="match status" value="1"/>
</dbReference>
<dbReference type="FunFam" id="2.40.50.100:FF:000008">
    <property type="entry name" value="V-type proton ATPase catalytic subunit A"/>
    <property type="match status" value="1"/>
</dbReference>
<dbReference type="Gene3D" id="2.40.30.20">
    <property type="match status" value="1"/>
</dbReference>
<dbReference type="Gene3D" id="2.40.50.100">
    <property type="match status" value="1"/>
</dbReference>
<dbReference type="Gene3D" id="1.10.1140.10">
    <property type="entry name" value="Bovine Mitochondrial F1-atpase, Atp Synthase Beta Chain, Chain D, domain 3"/>
    <property type="match status" value="1"/>
</dbReference>
<dbReference type="Gene3D" id="3.40.50.300">
    <property type="entry name" value="P-loop containing nucleotide triphosphate hydrolases"/>
    <property type="match status" value="1"/>
</dbReference>
<dbReference type="HAMAP" id="MF_00309">
    <property type="entry name" value="ATP_synth_A_arch"/>
    <property type="match status" value="1"/>
</dbReference>
<dbReference type="InterPro" id="IPR055190">
    <property type="entry name" value="ATP-synt_VA_C"/>
</dbReference>
<dbReference type="InterPro" id="IPR031686">
    <property type="entry name" value="ATP-synth_a_Xtn"/>
</dbReference>
<dbReference type="InterPro" id="IPR023366">
    <property type="entry name" value="ATP_synth_asu-like_sf"/>
</dbReference>
<dbReference type="InterPro" id="IPR020003">
    <property type="entry name" value="ATPase_a/bsu_AS"/>
</dbReference>
<dbReference type="InterPro" id="IPR004100">
    <property type="entry name" value="ATPase_F1/V1/A1_a/bsu_N"/>
</dbReference>
<dbReference type="InterPro" id="IPR036121">
    <property type="entry name" value="ATPase_F1/V1/A1_a/bsu_N_sf"/>
</dbReference>
<dbReference type="InterPro" id="IPR000194">
    <property type="entry name" value="ATPase_F1/V1/A1_a/bsu_nucl-bd"/>
</dbReference>
<dbReference type="InterPro" id="IPR024034">
    <property type="entry name" value="ATPase_F1/V1_b/a_C"/>
</dbReference>
<dbReference type="InterPro" id="IPR027417">
    <property type="entry name" value="P-loop_NTPase"/>
</dbReference>
<dbReference type="InterPro" id="IPR022878">
    <property type="entry name" value="V-ATPase_asu"/>
</dbReference>
<dbReference type="NCBIfam" id="NF003220">
    <property type="entry name" value="PRK04192.1"/>
    <property type="match status" value="1"/>
</dbReference>
<dbReference type="PANTHER" id="PTHR43607:SF1">
    <property type="entry name" value="H(+)-TRANSPORTING TWO-SECTOR ATPASE"/>
    <property type="match status" value="1"/>
</dbReference>
<dbReference type="PANTHER" id="PTHR43607">
    <property type="entry name" value="V-TYPE PROTON ATPASE CATALYTIC SUBUNIT A"/>
    <property type="match status" value="1"/>
</dbReference>
<dbReference type="Pfam" id="PF00006">
    <property type="entry name" value="ATP-synt_ab"/>
    <property type="match status" value="1"/>
</dbReference>
<dbReference type="Pfam" id="PF02874">
    <property type="entry name" value="ATP-synt_ab_N"/>
    <property type="match status" value="1"/>
</dbReference>
<dbReference type="Pfam" id="PF16886">
    <property type="entry name" value="ATP-synt_ab_Xtn"/>
    <property type="match status" value="1"/>
</dbReference>
<dbReference type="Pfam" id="PF22919">
    <property type="entry name" value="ATP-synt_VA_C"/>
    <property type="match status" value="1"/>
</dbReference>
<dbReference type="SUPFAM" id="SSF47917">
    <property type="entry name" value="C-terminal domain of alpha and beta subunits of F1 ATP synthase"/>
    <property type="match status" value="1"/>
</dbReference>
<dbReference type="SUPFAM" id="SSF50615">
    <property type="entry name" value="N-terminal domain of alpha and beta subunits of F1 ATP synthase"/>
    <property type="match status" value="1"/>
</dbReference>
<dbReference type="SUPFAM" id="SSF52540">
    <property type="entry name" value="P-loop containing nucleoside triphosphate hydrolases"/>
    <property type="match status" value="1"/>
</dbReference>
<dbReference type="PROSITE" id="PS00152">
    <property type="entry name" value="ATPASE_ALPHA_BETA"/>
    <property type="match status" value="1"/>
</dbReference>
<reference key="1">
    <citation type="journal article" date="2001" name="Science">
        <title>Complete genome sequence of a virulent isolate of Streptococcus pneumoniae.</title>
        <authorList>
            <person name="Tettelin H."/>
            <person name="Nelson K.E."/>
            <person name="Paulsen I.T."/>
            <person name="Eisen J.A."/>
            <person name="Read T.D."/>
            <person name="Peterson S.N."/>
            <person name="Heidelberg J.F."/>
            <person name="DeBoy R.T."/>
            <person name="Haft D.H."/>
            <person name="Dodson R.J."/>
            <person name="Durkin A.S."/>
            <person name="Gwinn M.L."/>
            <person name="Kolonay J.F."/>
            <person name="Nelson W.C."/>
            <person name="Peterson J.D."/>
            <person name="Umayam L.A."/>
            <person name="White O."/>
            <person name="Salzberg S.L."/>
            <person name="Lewis M.R."/>
            <person name="Radune D."/>
            <person name="Holtzapple E.K."/>
            <person name="Khouri H.M."/>
            <person name="Wolf A.M."/>
            <person name="Utterback T.R."/>
            <person name="Hansen C.L."/>
            <person name="McDonald L.A."/>
            <person name="Feldblyum T.V."/>
            <person name="Angiuoli S.V."/>
            <person name="Dickinson T."/>
            <person name="Hickey E.K."/>
            <person name="Holt I.E."/>
            <person name="Loftus B.J."/>
            <person name="Yang F."/>
            <person name="Smith H.O."/>
            <person name="Venter J.C."/>
            <person name="Dougherty B.A."/>
            <person name="Morrison D.A."/>
            <person name="Hollingshead S.K."/>
            <person name="Fraser C.M."/>
        </authorList>
    </citation>
    <scope>NUCLEOTIDE SEQUENCE [LARGE SCALE GENOMIC DNA]</scope>
    <source>
        <strain>ATCC BAA-334 / TIGR4</strain>
    </source>
</reference>